<gene>
    <name type="primary">vps26b-b</name>
</gene>
<dbReference type="EMBL" id="BC076820">
    <property type="protein sequence ID" value="AAH76820.1"/>
    <property type="molecule type" value="mRNA"/>
</dbReference>
<dbReference type="RefSeq" id="NP_001086570.1">
    <property type="nucleotide sequence ID" value="NM_001093101.1"/>
</dbReference>
<dbReference type="SMR" id="Q6DFB9"/>
<dbReference type="DNASU" id="446405"/>
<dbReference type="GeneID" id="446405"/>
<dbReference type="KEGG" id="xla:446405"/>
<dbReference type="AGR" id="Xenbase:XB-GENE-945599"/>
<dbReference type="CTD" id="446405"/>
<dbReference type="Xenbase" id="XB-GENE-945599">
    <property type="gene designation" value="vps26b.S"/>
</dbReference>
<dbReference type="OMA" id="CNVLITF"/>
<dbReference type="OrthoDB" id="3821113at2759"/>
<dbReference type="Proteomes" id="UP000186698">
    <property type="component" value="Chromosome 7S"/>
</dbReference>
<dbReference type="Bgee" id="446405">
    <property type="expression patterns" value="Expressed in egg cell and 19 other cell types or tissues"/>
</dbReference>
<dbReference type="GO" id="GO:0005829">
    <property type="term" value="C:cytosol"/>
    <property type="evidence" value="ECO:0007669"/>
    <property type="project" value="GOC"/>
</dbReference>
<dbReference type="GO" id="GO:0005768">
    <property type="term" value="C:endosome"/>
    <property type="evidence" value="ECO:0000318"/>
    <property type="project" value="GO_Central"/>
</dbReference>
<dbReference type="GO" id="GO:0030904">
    <property type="term" value="C:retromer complex"/>
    <property type="evidence" value="ECO:0000318"/>
    <property type="project" value="GO_Central"/>
</dbReference>
<dbReference type="GO" id="GO:0006886">
    <property type="term" value="P:intracellular protein transport"/>
    <property type="evidence" value="ECO:0000318"/>
    <property type="project" value="GO_Central"/>
</dbReference>
<dbReference type="GO" id="GO:0042147">
    <property type="term" value="P:retrograde transport, endosome to Golgi"/>
    <property type="evidence" value="ECO:0000318"/>
    <property type="project" value="GO_Central"/>
</dbReference>
<dbReference type="FunFam" id="2.60.40.640:FF:000001">
    <property type="entry name" value="Vacuolar protein sorting-associated protein 26A"/>
    <property type="match status" value="1"/>
</dbReference>
<dbReference type="FunFam" id="2.60.40.640:FF:000002">
    <property type="entry name" value="Vacuolar protein sorting-associated protein 26A"/>
    <property type="match status" value="1"/>
</dbReference>
<dbReference type="Gene3D" id="2.60.40.640">
    <property type="match status" value="2"/>
</dbReference>
<dbReference type="InterPro" id="IPR014752">
    <property type="entry name" value="Arrestin-like_C"/>
</dbReference>
<dbReference type="InterPro" id="IPR028934">
    <property type="entry name" value="Vps26-related"/>
</dbReference>
<dbReference type="PANTHER" id="PTHR12233">
    <property type="entry name" value="VACUOLAR PROTEIN SORTING 26 RELATED"/>
    <property type="match status" value="1"/>
</dbReference>
<dbReference type="Pfam" id="PF03643">
    <property type="entry name" value="Vps26"/>
    <property type="match status" value="1"/>
</dbReference>
<feature type="chain" id="PRO_0000247095" description="Vacuolar protein sorting-associated protein 26B-B">
    <location>
        <begin position="1"/>
        <end position="337"/>
    </location>
</feature>
<feature type="region of interest" description="Disordered" evidence="2">
    <location>
        <begin position="313"/>
        <end position="337"/>
    </location>
</feature>
<organism>
    <name type="scientific">Xenopus laevis</name>
    <name type="common">African clawed frog</name>
    <dbReference type="NCBI Taxonomy" id="8355"/>
    <lineage>
        <taxon>Eukaryota</taxon>
        <taxon>Metazoa</taxon>
        <taxon>Chordata</taxon>
        <taxon>Craniata</taxon>
        <taxon>Vertebrata</taxon>
        <taxon>Euteleostomi</taxon>
        <taxon>Amphibia</taxon>
        <taxon>Batrachia</taxon>
        <taxon>Anura</taxon>
        <taxon>Pipoidea</taxon>
        <taxon>Pipidae</taxon>
        <taxon>Xenopodinae</taxon>
        <taxon>Xenopus</taxon>
        <taxon>Xenopus</taxon>
    </lineage>
</organism>
<comment type="function">
    <text evidence="1">Acts as a component of the retromer cargo-selective complex (CSC). The CSC is believed to be the core functional component of retromer or respective retromer complex variants acting to prevent missorting of selected transmembrane cargo proteins into the lysosomal degradation pathway. Retromer mediates retrograde transport of cargo proteins from endosomes to the trans-Golgi network (TGN) (By similarity).</text>
</comment>
<comment type="subunit">
    <text evidence="1">Component of the heterotrimeric retromer cargo-selective complex (CSC) which is believed to associate with variable sorting nexins to form functionally distinct retromer complex variants (By similarity).</text>
</comment>
<comment type="subcellular location">
    <subcellularLocation>
        <location evidence="1">Cytoplasm</location>
    </subcellularLocation>
    <subcellularLocation>
        <location>Membrane</location>
        <topology evidence="1">Peripheral membrane protein</topology>
    </subcellularLocation>
    <subcellularLocation>
        <location evidence="1">Endosome</location>
    </subcellularLocation>
</comment>
<comment type="similarity">
    <text evidence="3">Belongs to the VPS26 family.</text>
</comment>
<name>V26BB_XENLA</name>
<sequence>MSFFGFGPAAELDIALTDGESRRRVEHKTEDGKKEKYFLFYDGETVSGRVTVSLRNPGKRLEHQGLKIEFIGQIELYYDRGNHHEFVSLVKDLARPGELSQSQSFDFEFTHVEKPYESYTGQNVKLRYFLRATLSRRLNDVAKEMDIVVYTLSTYPELNSSIKMEVGIEDCLHIEFEYNKSKYHLKDVIVGKIYFLLVRIKIKHMEIDIIKRETTGTGPNVYHENDTIAKYEIMDGAPVRGESIPIRLFLAGYELTPTMRDINKKFSVRYYLNLVLIDEEERRYFKQQEIVLWRKGDIVRKSMSHQAAIASQRFEGTSHPETRPQHSGAAALEQEHE</sequence>
<evidence type="ECO:0000250" key="1">
    <source>
        <dbReference type="UniProtKB" id="Q8C0E2"/>
    </source>
</evidence>
<evidence type="ECO:0000256" key="2">
    <source>
        <dbReference type="SAM" id="MobiDB-lite"/>
    </source>
</evidence>
<evidence type="ECO:0000305" key="3"/>
<reference key="1">
    <citation type="submission" date="2004-07" db="EMBL/GenBank/DDBJ databases">
        <authorList>
            <consortium name="NIH - Xenopus Gene Collection (XGC) project"/>
        </authorList>
    </citation>
    <scope>NUCLEOTIDE SEQUENCE [LARGE SCALE MRNA]</scope>
    <source>
        <tissue>Oocyte</tissue>
    </source>
</reference>
<accession>Q6DFB9</accession>
<protein>
    <recommendedName>
        <fullName>Vacuolar protein sorting-associated protein 26B-B</fullName>
    </recommendedName>
    <alternativeName>
        <fullName>Vesicle protein sorting 26B-B</fullName>
    </alternativeName>
</protein>
<proteinExistence type="evidence at transcript level"/>
<keyword id="KW-0963">Cytoplasm</keyword>
<keyword id="KW-0967">Endosome</keyword>
<keyword id="KW-0472">Membrane</keyword>
<keyword id="KW-0653">Protein transport</keyword>
<keyword id="KW-1185">Reference proteome</keyword>
<keyword id="KW-0813">Transport</keyword>